<keyword id="KW-0002">3D-structure</keyword>
<keyword id="KW-0067">ATP-binding</keyword>
<keyword id="KW-0072">Autophagy</keyword>
<keyword id="KW-0131">Cell cycle</keyword>
<keyword id="KW-0132">Cell division</keyword>
<keyword id="KW-0968">Cytoplasmic vesicle</keyword>
<keyword id="KW-0967">Endosome</keyword>
<keyword id="KW-0418">Kinase</keyword>
<keyword id="KW-0443">Lipid metabolism</keyword>
<keyword id="KW-0464">Manganese</keyword>
<keyword id="KW-0547">Nucleotide-binding</keyword>
<keyword id="KW-0597">Phosphoprotein</keyword>
<keyword id="KW-1267">Proteomics identification</keyword>
<keyword id="KW-1185">Reference proteome</keyword>
<keyword id="KW-0808">Transferase</keyword>
<keyword id="KW-0832">Ubl conjugation</keyword>
<protein>
    <recommendedName>
        <fullName>Phosphatidylinositol 3-kinase catalytic subunit type 3</fullName>
        <shortName>PI3-kinase type 3</shortName>
        <shortName>PI3K type 3</shortName>
        <shortName>PtdIns-3-kinase type 3</shortName>
        <ecNumber evidence="23">2.7.1.137</ecNumber>
    </recommendedName>
    <alternativeName>
        <fullName>Phosphatidylinositol 3-kinase p100 subunit</fullName>
    </alternativeName>
    <alternativeName>
        <fullName>Phosphoinositide-3-kinase class 3</fullName>
    </alternativeName>
    <alternativeName>
        <fullName>hVps34</fullName>
    </alternativeName>
</protein>
<proteinExistence type="evidence at protein level"/>
<organism>
    <name type="scientific">Homo sapiens</name>
    <name type="common">Human</name>
    <dbReference type="NCBI Taxonomy" id="9606"/>
    <lineage>
        <taxon>Eukaryota</taxon>
        <taxon>Metazoa</taxon>
        <taxon>Chordata</taxon>
        <taxon>Craniata</taxon>
        <taxon>Vertebrata</taxon>
        <taxon>Euteleostomi</taxon>
        <taxon>Mammalia</taxon>
        <taxon>Eutheria</taxon>
        <taxon>Euarchontoglires</taxon>
        <taxon>Primates</taxon>
        <taxon>Haplorrhini</taxon>
        <taxon>Catarrhini</taxon>
        <taxon>Hominidae</taxon>
        <taxon>Homo</taxon>
    </lineage>
</organism>
<evidence type="ECO:0000250" key="1">
    <source>
        <dbReference type="UniProtKB" id="O88763"/>
    </source>
</evidence>
<evidence type="ECO:0000250" key="2">
    <source>
        <dbReference type="UniProtKB" id="Q6PF93"/>
    </source>
</evidence>
<evidence type="ECO:0000250" key="3">
    <source>
        <dbReference type="UniProtKB" id="Q9TXI7"/>
    </source>
</evidence>
<evidence type="ECO:0000255" key="4">
    <source>
        <dbReference type="PROSITE-ProRule" id="PRU00269"/>
    </source>
</evidence>
<evidence type="ECO:0000255" key="5">
    <source>
        <dbReference type="PROSITE-ProRule" id="PRU00878"/>
    </source>
</evidence>
<evidence type="ECO:0000255" key="6">
    <source>
        <dbReference type="PROSITE-ProRule" id="PRU00880"/>
    </source>
</evidence>
<evidence type="ECO:0000256" key="7">
    <source>
        <dbReference type="SAM" id="MobiDB-lite"/>
    </source>
</evidence>
<evidence type="ECO:0000269" key="8">
    <source>
    </source>
</evidence>
<evidence type="ECO:0000269" key="9">
    <source>
    </source>
</evidence>
<evidence type="ECO:0000269" key="10">
    <source>
    </source>
</evidence>
<evidence type="ECO:0000269" key="11">
    <source>
    </source>
</evidence>
<evidence type="ECO:0000269" key="12">
    <source>
    </source>
</evidence>
<evidence type="ECO:0000269" key="13">
    <source>
    </source>
</evidence>
<evidence type="ECO:0000269" key="14">
    <source>
    </source>
</evidence>
<evidence type="ECO:0000269" key="15">
    <source>
    </source>
</evidence>
<evidence type="ECO:0000269" key="16">
    <source>
    </source>
</evidence>
<evidence type="ECO:0000269" key="17">
    <source>
    </source>
</evidence>
<evidence type="ECO:0000269" key="18">
    <source>
    </source>
</evidence>
<evidence type="ECO:0000269" key="19">
    <source>
    </source>
</evidence>
<evidence type="ECO:0000269" key="20">
    <source>
    </source>
</evidence>
<evidence type="ECO:0000269" key="21">
    <source>
    </source>
</evidence>
<evidence type="ECO:0000269" key="22">
    <source>
    </source>
</evidence>
<evidence type="ECO:0000269" key="23">
    <source>
    </source>
</evidence>
<evidence type="ECO:0000305" key="24"/>
<evidence type="ECO:0000305" key="25">
    <source>
    </source>
</evidence>
<evidence type="ECO:0000305" key="26">
    <source>
    </source>
</evidence>
<evidence type="ECO:0000312" key="27">
    <source>
        <dbReference type="HGNC" id="HGNC:8974"/>
    </source>
</evidence>
<evidence type="ECO:0007744" key="28">
    <source>
    </source>
</evidence>
<evidence type="ECO:0007744" key="29">
    <source>
    </source>
</evidence>
<evidence type="ECO:0007829" key="30">
    <source>
        <dbReference type="PDB" id="4UWF"/>
    </source>
</evidence>
<evidence type="ECO:0007829" key="31">
    <source>
        <dbReference type="PDB" id="4UWG"/>
    </source>
</evidence>
<evidence type="ECO:0007829" key="32">
    <source>
        <dbReference type="PDB" id="4UWH"/>
    </source>
</evidence>
<evidence type="ECO:0007829" key="33">
    <source>
        <dbReference type="PDB" id="6I3U"/>
    </source>
</evidence>
<evidence type="ECO:0007829" key="34">
    <source>
        <dbReference type="PDB" id="7RSJ"/>
    </source>
</evidence>
<evidence type="ECO:0007829" key="35">
    <source>
        <dbReference type="PDB" id="7RSP"/>
    </source>
</evidence>
<name>PK3C3_HUMAN</name>
<accession>Q8NEB9</accession>
<accession>Q15134</accession>
<feature type="chain" id="PRO_0000088802" description="Phosphatidylinositol 3-kinase catalytic subunit type 3">
    <location>
        <begin position="1"/>
        <end position="887"/>
    </location>
</feature>
<feature type="domain" description="C2 PI3K-type" evidence="6">
    <location>
        <begin position="35"/>
        <end position="184"/>
    </location>
</feature>
<feature type="domain" description="PIK helical" evidence="5">
    <location>
        <begin position="283"/>
        <end position="520"/>
    </location>
</feature>
<feature type="domain" description="PI3K/PI4K catalytic" evidence="4">
    <location>
        <begin position="605"/>
        <end position="871"/>
    </location>
</feature>
<feature type="region of interest" description="Disordered" evidence="7">
    <location>
        <begin position="149"/>
        <end position="170"/>
    </location>
</feature>
<feature type="region of interest" description="Disordered" evidence="7">
    <location>
        <begin position="447"/>
        <end position="467"/>
    </location>
</feature>
<feature type="region of interest" description="G-loop" evidence="4">
    <location>
        <begin position="611"/>
        <end position="617"/>
    </location>
</feature>
<feature type="region of interest" description="Catalytic loop" evidence="4">
    <location>
        <begin position="740"/>
        <end position="748"/>
    </location>
</feature>
<feature type="region of interest" description="Activation loop" evidence="4">
    <location>
        <begin position="759"/>
        <end position="780"/>
    </location>
</feature>
<feature type="compositionally biased region" description="Polar residues" evidence="7">
    <location>
        <begin position="156"/>
        <end position="170"/>
    </location>
</feature>
<feature type="modified residue" description="Phosphothreonine; by AMPK" evidence="2">
    <location>
        <position position="163"/>
    </location>
</feature>
<feature type="modified residue" description="Phosphoserine; by AMPK" evidence="2">
    <location>
        <position position="165"/>
    </location>
</feature>
<feature type="modified residue" description="Phosphoserine" evidence="1">
    <location>
        <position position="244"/>
    </location>
</feature>
<feature type="modified residue" description="Phosphoserine" evidence="28">
    <location>
        <position position="261"/>
    </location>
</feature>
<feature type="modified residue" description="Phosphoserine" evidence="29">
    <location>
        <position position="282"/>
    </location>
</feature>
<feature type="sequence conflict" description="In Ref. 1; CAA87094." evidence="24" ref="1">
    <original>K</original>
    <variation>N</variation>
    <location>
        <position position="36"/>
    </location>
</feature>
<feature type="sequence conflict" description="In Ref. 1; CAA87094." evidence="24" ref="1">
    <original>L</original>
    <variation>S</variation>
    <location>
        <position position="70"/>
    </location>
</feature>
<feature type="sequence conflict" description="In Ref. 1; CAA87094." evidence="24" ref="1">
    <original>F</original>
    <variation>S</variation>
    <location>
        <position position="136"/>
    </location>
</feature>
<feature type="sequence conflict" description="In Ref. 1; CAA87094." evidence="24" ref="1">
    <original>K</original>
    <variation>N</variation>
    <location>
        <position position="158"/>
    </location>
</feature>
<feature type="sequence conflict" description="In Ref. 1; CAA87094." evidence="24" ref="1">
    <original>E</original>
    <variation>V</variation>
    <location>
        <position position="208"/>
    </location>
</feature>
<feature type="sequence conflict" description="In Ref. 1; CAA87094." evidence="24" ref="1">
    <original>VE</original>
    <variation>GG</variation>
    <location>
        <begin position="219"/>
        <end position="220"/>
    </location>
</feature>
<feature type="sequence conflict" description="In Ref. 1; CAA87094." evidence="24" ref="1">
    <original>M</original>
    <variation>L</variation>
    <location>
        <position position="262"/>
    </location>
</feature>
<feature type="sequence conflict" description="In Ref. 1; CAA87094." evidence="24" ref="1">
    <original>KLA</original>
    <variation>NLP</variation>
    <location>
        <begin position="272"/>
        <end position="274"/>
    </location>
</feature>
<feature type="sequence conflict" description="In Ref. 1; CAA87094." evidence="24" ref="1">
    <original>NAAT</original>
    <variation>YPSP</variation>
    <location>
        <begin position="289"/>
        <end position="292"/>
    </location>
</feature>
<feature type="sequence conflict" description="In Ref. 1; CAA87094." evidence="24" ref="1">
    <original>NI</original>
    <variation>KN</variation>
    <location>
        <begin position="297"/>
        <end position="298"/>
    </location>
</feature>
<feature type="sequence conflict" description="In Ref. 1; CAA87094." evidence="24" ref="1">
    <original>TKQL</original>
    <variation>SKPP</variation>
    <location>
        <begin position="305"/>
        <end position="308"/>
    </location>
</feature>
<feature type="sequence conflict" description="In Ref. 1; CAA87094." evidence="24" ref="1">
    <original>K</original>
    <variation>E</variation>
    <location>
        <position position="318"/>
    </location>
</feature>
<feature type="sequence conflict" description="In Ref. 1; CAA87094." evidence="24" ref="1">
    <original>E</original>
    <variation>D</variation>
    <location>
        <position position="327"/>
    </location>
</feature>
<feature type="sequence conflict" description="In Ref. 1; CAA87094." evidence="24" ref="1">
    <original>FLKCVN</original>
    <variation>ILTSVI</variation>
    <location>
        <begin position="333"/>
        <end position="338"/>
    </location>
</feature>
<feature type="sequence conflict" description="In Ref. 1; CAA87094." evidence="24" ref="1">
    <original>E</original>
    <variation>G</variation>
    <location>
        <position position="344"/>
    </location>
</feature>
<feature type="sequence conflict" description="In Ref. 1; CAA87094." evidence="24" ref="1">
    <original>E</original>
    <variation>A</variation>
    <location>
        <position position="350"/>
    </location>
</feature>
<feature type="sequence conflict" description="In Ref. 1; CAA87094." evidence="24" ref="1">
    <original>K</original>
    <variation>N</variation>
    <location>
        <position position="356"/>
    </location>
</feature>
<feature type="sequence conflict" description="In Ref. 1; CAA87094." evidence="24" ref="1">
    <original>L</original>
    <variation>I</variation>
    <location>
        <position position="367"/>
    </location>
</feature>
<feature type="sequence conflict" description="In Ref. 1; CAA87094." evidence="24" ref="1">
    <original>L</original>
    <variation>S</variation>
    <location>
        <position position="397"/>
    </location>
</feature>
<feature type="sequence conflict" description="In Ref. 1; CAA87094." evidence="24" ref="1">
    <original>E</original>
    <variation>G</variation>
    <location>
        <position position="428"/>
    </location>
</feature>
<feature type="sequence conflict" description="In Ref. 1; CAA87094." evidence="24" ref="1">
    <original>C</original>
    <variation>S</variation>
    <location>
        <position position="484"/>
    </location>
</feature>
<feature type="sequence conflict" description="In Ref. 1; CAA87094." evidence="24" ref="1">
    <original>L</original>
    <variation>V</variation>
    <location>
        <position position="750"/>
    </location>
</feature>
<feature type="sequence conflict" description="In Ref. 1; CAA87094." evidence="24" ref="1">
    <original>A</original>
    <variation>P</variation>
    <location>
        <position position="826"/>
    </location>
</feature>
<feature type="helix" evidence="33">
    <location>
        <begin position="275"/>
        <end position="278"/>
    </location>
</feature>
<feature type="helix" evidence="33">
    <location>
        <begin position="281"/>
        <end position="283"/>
    </location>
</feature>
<feature type="helix" evidence="35">
    <location>
        <begin position="290"/>
        <end position="301"/>
    </location>
</feature>
<feature type="strand" evidence="31">
    <location>
        <begin position="304"/>
        <end position="306"/>
    </location>
</feature>
<feature type="helix" evidence="35">
    <location>
        <begin position="310"/>
        <end position="318"/>
    </location>
</feature>
<feature type="helix" evidence="35">
    <location>
        <begin position="320"/>
        <end position="323"/>
    </location>
</feature>
<feature type="helix" evidence="35">
    <location>
        <begin position="327"/>
        <end position="329"/>
    </location>
</feature>
<feature type="helix" evidence="35">
    <location>
        <begin position="330"/>
        <end position="336"/>
    </location>
</feature>
<feature type="helix" evidence="35">
    <location>
        <begin position="342"/>
        <end position="354"/>
    </location>
</feature>
<feature type="helix" evidence="35">
    <location>
        <begin position="360"/>
        <end position="367"/>
    </location>
</feature>
<feature type="helix" evidence="35">
    <location>
        <begin position="374"/>
        <end position="384"/>
    </location>
</feature>
<feature type="helix" evidence="35">
    <location>
        <begin position="389"/>
        <end position="402"/>
    </location>
</feature>
<feature type="helix" evidence="35">
    <location>
        <begin position="403"/>
        <end position="405"/>
    </location>
</feature>
<feature type="helix" evidence="35">
    <location>
        <begin position="408"/>
        <end position="413"/>
    </location>
</feature>
<feature type="helix" evidence="32">
    <location>
        <begin position="437"/>
        <end position="439"/>
    </location>
</feature>
<feature type="helix" evidence="34">
    <location>
        <begin position="442"/>
        <end position="444"/>
    </location>
</feature>
<feature type="turn" evidence="34">
    <location>
        <begin position="445"/>
        <end position="447"/>
    </location>
</feature>
<feature type="helix" evidence="35">
    <location>
        <begin position="475"/>
        <end position="484"/>
    </location>
</feature>
<feature type="helix" evidence="35">
    <location>
        <begin position="487"/>
        <end position="501"/>
    </location>
</feature>
<feature type="helix" evidence="35">
    <location>
        <begin position="504"/>
        <end position="509"/>
    </location>
</feature>
<feature type="helix" evidence="35">
    <location>
        <begin position="511"/>
        <end position="530"/>
    </location>
</feature>
<feature type="helix" evidence="35">
    <location>
        <begin position="533"/>
        <end position="561"/>
    </location>
</feature>
<feature type="helix" evidence="35">
    <location>
        <begin position="566"/>
        <end position="578"/>
    </location>
</feature>
<feature type="turn" evidence="35">
    <location>
        <begin position="580"/>
        <end position="583"/>
    </location>
</feature>
<feature type="strand" evidence="35">
    <location>
        <begin position="591"/>
        <end position="593"/>
    </location>
</feature>
<feature type="strand" evidence="35">
    <location>
        <begin position="596"/>
        <end position="604"/>
    </location>
</feature>
<feature type="helix" evidence="35">
    <location>
        <begin position="606"/>
        <end position="608"/>
    </location>
</feature>
<feature type="strand" evidence="33">
    <location>
        <begin position="613"/>
        <end position="616"/>
    </location>
</feature>
<feature type="strand" evidence="35">
    <location>
        <begin position="619"/>
        <end position="625"/>
    </location>
</feature>
<feature type="strand" evidence="35">
    <location>
        <begin position="630"/>
        <end position="638"/>
    </location>
</feature>
<feature type="helix" evidence="35">
    <location>
        <begin position="642"/>
        <end position="660"/>
    </location>
</feature>
<feature type="strand" evidence="35">
    <location>
        <begin position="672"/>
        <end position="676"/>
    </location>
</feature>
<feature type="strand" evidence="35">
    <location>
        <begin position="679"/>
        <end position="683"/>
    </location>
</feature>
<feature type="helix" evidence="35">
    <location>
        <begin position="690"/>
        <end position="697"/>
    </location>
</feature>
<feature type="helix" evidence="35">
    <location>
        <begin position="700"/>
        <end position="707"/>
    </location>
</feature>
<feature type="strand" evidence="32">
    <location>
        <begin position="711"/>
        <end position="713"/>
    </location>
</feature>
<feature type="helix" evidence="35">
    <location>
        <begin position="714"/>
        <end position="716"/>
    </location>
</feature>
<feature type="helix" evidence="35">
    <location>
        <begin position="719"/>
        <end position="738"/>
    </location>
</feature>
<feature type="strand" evidence="35">
    <location>
        <begin position="748"/>
        <end position="751"/>
    </location>
</feature>
<feature type="strand" evidence="35">
    <location>
        <begin position="757"/>
        <end position="759"/>
    </location>
</feature>
<feature type="strand" evidence="35">
    <location>
        <begin position="770"/>
        <end position="773"/>
    </location>
</feature>
<feature type="helix" evidence="35">
    <location>
        <begin position="781"/>
        <end position="786"/>
    </location>
</feature>
<feature type="strand" evidence="30">
    <location>
        <begin position="790"/>
        <end position="792"/>
    </location>
</feature>
<feature type="helix" evidence="35">
    <location>
        <begin position="793"/>
        <end position="811"/>
    </location>
</feature>
<feature type="helix" evidence="35">
    <location>
        <begin position="813"/>
        <end position="821"/>
    </location>
</feature>
<feature type="turn" evidence="35">
    <location>
        <begin position="822"/>
        <end position="825"/>
    </location>
</feature>
<feature type="helix" evidence="35">
    <location>
        <begin position="829"/>
        <end position="832"/>
    </location>
</feature>
<feature type="helix" evidence="35">
    <location>
        <begin position="835"/>
        <end position="837"/>
    </location>
</feature>
<feature type="helix" evidence="35">
    <location>
        <begin position="838"/>
        <end position="845"/>
    </location>
</feature>
<feature type="turn" evidence="35">
    <location>
        <begin position="846"/>
        <end position="849"/>
    </location>
</feature>
<feature type="helix" evidence="35">
    <location>
        <begin position="852"/>
        <end position="868"/>
    </location>
</feature>
<comment type="function">
    <text evidence="1 8 12 13 19 21 23">Catalytic subunit of the PI3K complex that mediates formation of phosphatidylinositol 3-phosphate; different complex forms are believed to play a role in multiple membrane trafficking pathways: PI3KC3-C1 is involved in initiation of autophagosomes and PI3KC3-C2 in maturation of autophagosomes and endocytosis (PubMed:14617358, PubMed:33637724, PubMed:7628435). As part of PI3KC3-C1, promotes endoplasmic reticulum membrane curvature formation prior to vesicle budding (PubMed:32690950). Involved in regulation of degradative endocytic trafficking and required for the abscission step in cytokinesis, probably in the context of PI3KC3-C2 (PubMed:20208530, PubMed:20643123). Involved in the transport of lysosomal enzyme precursors to lysosomes (By similarity). Required for transport from early to late endosomes (By similarity).</text>
</comment>
<comment type="function">
    <text evidence="22">(Microbial infection) Kinase activity is required for SARS coronavirus-2/SARS-CoV-2 replication.</text>
</comment>
<comment type="catalytic activity">
    <reaction evidence="23">
        <text>a 1,2-diacyl-sn-glycero-3-phospho-(1D-myo-inositol) + ATP = a 1,2-diacyl-sn-glycero-3-phospho-(1D-myo-inositol-3-phosphate) + ADP + H(+)</text>
        <dbReference type="Rhea" id="RHEA:12709"/>
        <dbReference type="ChEBI" id="CHEBI:15378"/>
        <dbReference type="ChEBI" id="CHEBI:30616"/>
        <dbReference type="ChEBI" id="CHEBI:57880"/>
        <dbReference type="ChEBI" id="CHEBI:58088"/>
        <dbReference type="ChEBI" id="CHEBI:456216"/>
        <dbReference type="EC" id="2.7.1.137"/>
    </reaction>
    <physiologicalReaction direction="left-to-right" evidence="26">
        <dbReference type="Rhea" id="RHEA:12710"/>
    </physiologicalReaction>
</comment>
<comment type="cofactor">
    <cofactor evidence="23">
        <name>Mn(2+)</name>
        <dbReference type="ChEBI" id="CHEBI:29035"/>
    </cofactor>
</comment>
<comment type="subunit">
    <text evidence="2 3 8 9 10 11 13 14 15 16 17 18 19 20 23 24">Component of the PI3K (PI3KC3/PI3K-III/class III phosphatidylinositol 3-kinase) complex the core of which is composed of the catalytic subunit PIK3C3, the regulatory subunit PIK3R4 and BECN1 associating with additional regulatory/auxiliary subunits to form alternative complex forms. Alternative complex forms containing a fourth regulatory subunit in a mutually exclusive manner are: the PI3K complex I (PI3KC3-C1) containing ATG14, and the PI3K complex II (PI3KC3-C2) containing UVRAG. PI3KC3-C1 displays a V-shaped architecture with PIK3R4 serving as a bridge between PIK3C3 and the ATG14:BECN1 subcomplex. Both, PI3KC3-C1 and PI3KC3-C2, can associate with further regulatory subunits such as RUBCN, SH3GLB1/Bif-1 and AMBRA1 (PubMed:19050071, PubMed:19270696, PubMed:20643123, PubMed:23878393, PubMed:25490155, PubMed:7628435). PI3KC3-C1 probably associates with PIK3CB (By similarity). Interacts with RAB7A in the presence of PIK3R4 (PubMed:14617358). Interacts with AMBRA1 (By similarity). Interacts with BECN1P1/BECN2 (PubMed:23954414). Interacts with SLAMF1 (PubMed:22493499). May be a component of a complex composed of RAB5A (in GDP-bound form), DYN2 and PIK3C3 (By similarity). Interacts with NCKAP1L (PubMed:16417406). Interacts with ATG14; this interaction is increased in the absence of TMEM39A (PubMed:31806350). Interacts with STEEP1; the interaction is STING1-dependent and required for trafficking of STING1 from the endoplasmic reticulum (PubMed:32690950). Interacts with YWHAG (PubMed:33473107). Interacts with ARMC3 (By similarity).</text>
</comment>
<comment type="interaction">
    <interactant intactId="EBI-1056470">
        <id>Q8NEB9</id>
    </interactant>
    <interactant intactId="EBI-2690371">
        <id>Q6ZNE5</id>
        <label>ATG14</label>
    </interactant>
    <organismsDiffer>false</organismsDiffer>
    <experiments>31</experiments>
</comment>
<comment type="interaction">
    <interactant intactId="EBI-1056470">
        <id>Q8NEB9</id>
    </interactant>
    <interactant intactId="EBI-949378">
        <id>Q14457</id>
        <label>BECN1</label>
    </interactant>
    <organismsDiffer>false</organismsDiffer>
    <experiments>43</experiments>
</comment>
<comment type="interaction">
    <interactant intactId="EBI-1056470">
        <id>Q8NEB9</id>
    </interactant>
    <interactant intactId="EBI-2362014">
        <id>Q96F24</id>
        <label>NRBF2</label>
    </interactant>
    <organismsDiffer>false</organismsDiffer>
    <experiments>14</experiments>
</comment>
<comment type="interaction">
    <interactant intactId="EBI-1056470">
        <id>Q8NEB9</id>
    </interactant>
    <interactant intactId="EBI-2952709">
        <id>Q92622</id>
        <label>RUBCN</label>
    </interactant>
    <organismsDiffer>false</organismsDiffer>
    <experiments>9</experiments>
</comment>
<comment type="interaction">
    <interactant intactId="EBI-1056470">
        <id>Q8NEB9</id>
    </interactant>
    <interactant intactId="EBI-2952704">
        <id>Q9P2Y5</id>
        <label>UVRAG</label>
    </interactant>
    <organismsDiffer>false</organismsDiffer>
    <experiments>25</experiments>
</comment>
<comment type="interaction">
    <interactant intactId="EBI-1056470">
        <id>Q8NEB9</id>
    </interactant>
    <interactant intactId="EBI-15834514">
        <id>Q17UT5</id>
        <label>X</label>
    </interactant>
    <organismsDiffer>true</organismsDiffer>
    <experiments>2</experiments>
</comment>
<comment type="subcellular location">
    <subcellularLocation>
        <location evidence="12">Midbody</location>
    </subcellularLocation>
    <subcellularLocation>
        <location evidence="8">Late endosome</location>
    </subcellularLocation>
    <subcellularLocation>
        <location evidence="25">Cytoplasmic vesicle</location>
        <location evidence="25">Autophagosome</location>
    </subcellularLocation>
    <text evidence="2 25">As component of the PI3K complex I localized to pre-autophagosome structures. As component of the PI3K complex II localized predominantly to endosomes (PubMed:14617358). Also localizes to discrete punctae along the ciliary axoneme and to the base of the ciliary axoneme (By similarity).</text>
</comment>
<comment type="tissue specificity">
    <text evidence="23">Ubiquitously expressed, with a highest expression in skeletal muscle.</text>
</comment>
<comment type="PTM">
    <text evidence="21">Ubiquitinated via 'Lys-29'- and 'Lys-48'-linked ubiquitination by UBE3C, promoting its degradation (PubMed:33637724). Deubiquitination by ZRANB1/TRABID promotes its stabilization, leading to autophagosome maturation (PubMed:33637724).</text>
</comment>
<comment type="similarity">
    <text evidence="6">Belongs to the PI3/PI4-kinase family.</text>
</comment>
<dbReference type="EC" id="2.7.1.137" evidence="23"/>
<dbReference type="EMBL" id="Z46973">
    <property type="protein sequence ID" value="CAA87094.1"/>
    <property type="molecule type" value="mRNA"/>
</dbReference>
<dbReference type="EMBL" id="BC033004">
    <property type="protein sequence ID" value="AAH33004.1"/>
    <property type="molecule type" value="mRNA"/>
</dbReference>
<dbReference type="EMBL" id="BC053651">
    <property type="protein sequence ID" value="AAH53651.1"/>
    <property type="molecule type" value="mRNA"/>
</dbReference>
<dbReference type="CCDS" id="CCDS11920.1"/>
<dbReference type="PIR" id="S57219">
    <property type="entry name" value="S57219"/>
</dbReference>
<dbReference type="RefSeq" id="NP_002638.2">
    <property type="nucleotide sequence ID" value="NM_002647.3"/>
</dbReference>
<dbReference type="PDB" id="3IHY">
    <property type="method" value="X-ray"/>
    <property type="resolution" value="2.80 A"/>
    <property type="chains" value="A/B/C/D/E=282-879"/>
</dbReference>
<dbReference type="PDB" id="3LS8">
    <property type="method" value="X-ray"/>
    <property type="resolution" value="2.25 A"/>
    <property type="chains" value="A/B=268-879"/>
</dbReference>
<dbReference type="PDB" id="4OYS">
    <property type="method" value="X-ray"/>
    <property type="resolution" value="2.90 A"/>
    <property type="chains" value="A=282-879"/>
</dbReference>
<dbReference type="PDB" id="4PH4">
    <property type="method" value="X-ray"/>
    <property type="resolution" value="2.80 A"/>
    <property type="chains" value="B=293-887"/>
</dbReference>
<dbReference type="PDB" id="4UWF">
    <property type="method" value="X-ray"/>
    <property type="resolution" value="2.99 A"/>
    <property type="chains" value="A=282-879"/>
</dbReference>
<dbReference type="PDB" id="4UWG">
    <property type="method" value="X-ray"/>
    <property type="resolution" value="2.70 A"/>
    <property type="chains" value="A=282-879"/>
</dbReference>
<dbReference type="PDB" id="4UWH">
    <property type="method" value="X-ray"/>
    <property type="resolution" value="1.93 A"/>
    <property type="chains" value="A=282-879"/>
</dbReference>
<dbReference type="PDB" id="4UWK">
    <property type="method" value="X-ray"/>
    <property type="resolution" value="2.83 A"/>
    <property type="chains" value="A=282-879"/>
</dbReference>
<dbReference type="PDB" id="4UWL">
    <property type="method" value="X-ray"/>
    <property type="resolution" value="2.80 A"/>
    <property type="chains" value="A=282-879"/>
</dbReference>
<dbReference type="PDB" id="5ANL">
    <property type="method" value="X-ray"/>
    <property type="resolution" value="2.70 A"/>
    <property type="chains" value="A=282-879"/>
</dbReference>
<dbReference type="PDB" id="5ENN">
    <property type="method" value="X-ray"/>
    <property type="resolution" value="2.70 A"/>
    <property type="chains" value="A/B=293-887"/>
</dbReference>
<dbReference type="PDB" id="6HOG">
    <property type="method" value="X-ray"/>
    <property type="resolution" value="1.26 A"/>
    <property type="chains" value="A=244-258"/>
</dbReference>
<dbReference type="PDB" id="6HOH">
    <property type="method" value="X-ray"/>
    <property type="resolution" value="2.25 A"/>
    <property type="chains" value="A/B/C/D=244-258"/>
</dbReference>
<dbReference type="PDB" id="6I3U">
    <property type="method" value="X-ray"/>
    <property type="resolution" value="2.09 A"/>
    <property type="chains" value="A=268-879"/>
</dbReference>
<dbReference type="PDB" id="6YKG">
    <property type="method" value="X-ray"/>
    <property type="resolution" value="3.12 A"/>
    <property type="chains" value="AAA=268-879"/>
</dbReference>
<dbReference type="PDB" id="7BL1">
    <property type="method" value="EM"/>
    <property type="resolution" value="9.80 A"/>
    <property type="chains" value="BBB=1-887"/>
</dbReference>
<dbReference type="PDB" id="7RSJ">
    <property type="method" value="X-ray"/>
    <property type="resolution" value="1.88 A"/>
    <property type="chains" value="A=282-879"/>
</dbReference>
<dbReference type="PDB" id="7RSP">
    <property type="method" value="X-ray"/>
    <property type="resolution" value="1.67 A"/>
    <property type="chains" value="A/B=282-879"/>
</dbReference>
<dbReference type="PDB" id="7RSV">
    <property type="method" value="X-ray"/>
    <property type="resolution" value="1.78 A"/>
    <property type="chains" value="A/B=282-879"/>
</dbReference>
<dbReference type="PDB" id="8RXR">
    <property type="method" value="X-ray"/>
    <property type="resolution" value="2.06 A"/>
    <property type="chains" value="A/B=282-879"/>
</dbReference>
<dbReference type="PDB" id="8SOR">
    <property type="method" value="EM"/>
    <property type="resolution" value="3.96 A"/>
    <property type="chains" value="B=1-887"/>
</dbReference>
<dbReference type="PDB" id="9C82">
    <property type="method" value="EM"/>
    <property type="resolution" value="6.84 A"/>
    <property type="chains" value="B=1-887"/>
</dbReference>
<dbReference type="PDB" id="9E4V">
    <property type="method" value="X-ray"/>
    <property type="resolution" value="2.36 A"/>
    <property type="chains" value="B=290-871"/>
</dbReference>
<dbReference type="PDB" id="9MHF">
    <property type="method" value="EM"/>
    <property type="resolution" value="2.73 A"/>
    <property type="chains" value="B=1-887"/>
</dbReference>
<dbReference type="PDB" id="9MHG">
    <property type="method" value="EM"/>
    <property type="resolution" value="3.20 A"/>
    <property type="chains" value="B=1-887"/>
</dbReference>
<dbReference type="PDB" id="9MHH">
    <property type="method" value="EM"/>
    <property type="resolution" value="4.50 A"/>
    <property type="chains" value="B=1-887"/>
</dbReference>
<dbReference type="PDBsum" id="3IHY"/>
<dbReference type="PDBsum" id="3LS8"/>
<dbReference type="PDBsum" id="4OYS"/>
<dbReference type="PDBsum" id="4PH4"/>
<dbReference type="PDBsum" id="4UWF"/>
<dbReference type="PDBsum" id="4UWG"/>
<dbReference type="PDBsum" id="4UWH"/>
<dbReference type="PDBsum" id="4UWK"/>
<dbReference type="PDBsum" id="4UWL"/>
<dbReference type="PDBsum" id="5ANL"/>
<dbReference type="PDBsum" id="5ENN"/>
<dbReference type="PDBsum" id="6HOG"/>
<dbReference type="PDBsum" id="6HOH"/>
<dbReference type="PDBsum" id="6I3U"/>
<dbReference type="PDBsum" id="6YKG"/>
<dbReference type="PDBsum" id="7BL1"/>
<dbReference type="PDBsum" id="7RSJ"/>
<dbReference type="PDBsum" id="7RSP"/>
<dbReference type="PDBsum" id="7RSV"/>
<dbReference type="PDBsum" id="8RXR"/>
<dbReference type="PDBsum" id="8SOR"/>
<dbReference type="PDBsum" id="9C82"/>
<dbReference type="PDBsum" id="9E4V"/>
<dbReference type="PDBsum" id="9MHF"/>
<dbReference type="PDBsum" id="9MHG"/>
<dbReference type="PDBsum" id="9MHH"/>
<dbReference type="EMDB" id="EMD-12214"/>
<dbReference type="EMDB" id="EMD-12237"/>
<dbReference type="EMDB" id="EMD-12238"/>
<dbReference type="EMDB" id="EMD-2846"/>
<dbReference type="EMDB" id="EMD-40669"/>
<dbReference type="EMDB" id="EMD-40738"/>
<dbReference type="EMDB" id="EMD-45297"/>
<dbReference type="EMDB" id="EMD-48276"/>
<dbReference type="EMDB" id="EMD-48277"/>
<dbReference type="EMDB" id="EMD-48278"/>
<dbReference type="SMR" id="Q8NEB9"/>
<dbReference type="BioGRID" id="111307">
    <property type="interactions" value="108"/>
</dbReference>
<dbReference type="ComplexPortal" id="CPX-73">
    <property type="entry name" value="Phosphatidylinositol 3-kinase complex, class III, ATG14 variant"/>
</dbReference>
<dbReference type="ComplexPortal" id="CPX-74">
    <property type="entry name" value="Phosphatidylinositol 3-kinase complex, class III, UVRAG variant"/>
</dbReference>
<dbReference type="CORUM" id="Q8NEB9"/>
<dbReference type="DIP" id="DIP-42272N"/>
<dbReference type="FunCoup" id="Q8NEB9">
    <property type="interactions" value="2678"/>
</dbReference>
<dbReference type="IntAct" id="Q8NEB9">
    <property type="interactions" value="59"/>
</dbReference>
<dbReference type="MINT" id="Q8NEB9"/>
<dbReference type="STRING" id="9606.ENSP00000262039"/>
<dbReference type="BindingDB" id="Q8NEB9"/>
<dbReference type="ChEMBL" id="CHEMBL1075165"/>
<dbReference type="DrugBank" id="DB11962">
    <property type="generic name" value="GSK-1059615"/>
</dbReference>
<dbReference type="DrugBank" id="DB06836">
    <property type="generic name" value="N-(5-{4-Chloro-3-[(2-hydroxyethyl)sulfamoyl]phenyl}-4-methyl-1,3-thiazol-2-yl)acetamide"/>
</dbReference>
<dbReference type="DrugCentral" id="Q8NEB9"/>
<dbReference type="GuidetoPHARMACOLOGY" id="2152"/>
<dbReference type="SwissLipids" id="SLP:000000904"/>
<dbReference type="GlyGen" id="Q8NEB9">
    <property type="glycosylation" value="1 site"/>
</dbReference>
<dbReference type="iPTMnet" id="Q8NEB9"/>
<dbReference type="MetOSite" id="Q8NEB9"/>
<dbReference type="PhosphoSitePlus" id="Q8NEB9"/>
<dbReference type="BioMuta" id="PIK3C3"/>
<dbReference type="DMDM" id="74730233"/>
<dbReference type="jPOST" id="Q8NEB9"/>
<dbReference type="MassIVE" id="Q8NEB9"/>
<dbReference type="PaxDb" id="9606-ENSP00000262039"/>
<dbReference type="PeptideAtlas" id="Q8NEB9"/>
<dbReference type="ProteomicsDB" id="73147"/>
<dbReference type="Pumba" id="Q8NEB9"/>
<dbReference type="Antibodypedia" id="22392">
    <property type="antibodies" value="900 antibodies from 39 providers"/>
</dbReference>
<dbReference type="DNASU" id="5289"/>
<dbReference type="Ensembl" id="ENST00000262039.9">
    <property type="protein sequence ID" value="ENSP00000262039.3"/>
    <property type="gene ID" value="ENSG00000078142.14"/>
</dbReference>
<dbReference type="GeneID" id="5289"/>
<dbReference type="KEGG" id="hsa:5289"/>
<dbReference type="MANE-Select" id="ENST00000262039.9">
    <property type="protein sequence ID" value="ENSP00000262039.3"/>
    <property type="RefSeq nucleotide sequence ID" value="NM_002647.4"/>
    <property type="RefSeq protein sequence ID" value="NP_002638.2"/>
</dbReference>
<dbReference type="UCSC" id="uc002lap.4">
    <property type="organism name" value="human"/>
</dbReference>
<dbReference type="AGR" id="HGNC:8974"/>
<dbReference type="CTD" id="5289"/>
<dbReference type="DisGeNET" id="5289"/>
<dbReference type="GeneCards" id="PIK3C3"/>
<dbReference type="HGNC" id="HGNC:8974">
    <property type="gene designation" value="PIK3C3"/>
</dbReference>
<dbReference type="HPA" id="ENSG00000078142">
    <property type="expression patterns" value="Low tissue specificity"/>
</dbReference>
<dbReference type="MIM" id="602609">
    <property type="type" value="gene"/>
</dbReference>
<dbReference type="neXtProt" id="NX_Q8NEB9"/>
<dbReference type="OpenTargets" id="ENSG00000078142"/>
<dbReference type="PharmGKB" id="PA33307"/>
<dbReference type="VEuPathDB" id="HostDB:ENSG00000078142"/>
<dbReference type="eggNOG" id="KOG0906">
    <property type="taxonomic scope" value="Eukaryota"/>
</dbReference>
<dbReference type="GeneTree" id="ENSGT00940000156943"/>
<dbReference type="InParanoid" id="Q8NEB9"/>
<dbReference type="OrthoDB" id="67688at2759"/>
<dbReference type="PAN-GO" id="Q8NEB9">
    <property type="GO annotations" value="13 GO annotations based on evolutionary models"/>
</dbReference>
<dbReference type="PhylomeDB" id="Q8NEB9"/>
<dbReference type="TreeFam" id="TF102032"/>
<dbReference type="BioCyc" id="MetaCyc:HS01275-MONOMER"/>
<dbReference type="BRENDA" id="2.7.1.137">
    <property type="organism ID" value="2681"/>
</dbReference>
<dbReference type="PathwayCommons" id="Q8NEB9"/>
<dbReference type="Reactome" id="R-HSA-109704">
    <property type="pathway name" value="PI3K Cascade"/>
</dbReference>
<dbReference type="Reactome" id="R-HSA-1632852">
    <property type="pathway name" value="Macroautophagy"/>
</dbReference>
<dbReference type="Reactome" id="R-HSA-1660514">
    <property type="pathway name" value="Synthesis of PIPs at the Golgi membrane"/>
</dbReference>
<dbReference type="Reactome" id="R-HSA-1660516">
    <property type="pathway name" value="Synthesis of PIPs at the early endosome membrane"/>
</dbReference>
<dbReference type="Reactome" id="R-HSA-1660517">
    <property type="pathway name" value="Synthesis of PIPs at the late endosome membrane"/>
</dbReference>
<dbReference type="Reactome" id="R-HSA-168138">
    <property type="pathway name" value="Toll Like Receptor 9 (TLR9) Cascade"/>
</dbReference>
<dbReference type="Reactome" id="R-HSA-5668599">
    <property type="pathway name" value="RHO GTPases Activate NADPH Oxidases"/>
</dbReference>
<dbReference type="Reactome" id="R-HSA-9679504">
    <property type="pathway name" value="Translation of Replicase and Assembly of the Replication Transcription Complex"/>
</dbReference>
<dbReference type="Reactome" id="R-HSA-9694676">
    <property type="pathway name" value="Translation of Replicase and Assembly of the Replication Transcription Complex"/>
</dbReference>
<dbReference type="Reactome" id="R-HSA-9705671">
    <property type="pathway name" value="SARS-CoV-2 activates/modulates innate and adaptive immune responses"/>
</dbReference>
<dbReference type="Reactome" id="R-HSA-983170">
    <property type="pathway name" value="Antigen Presentation: Folding, assembly and peptide loading of class I MHC"/>
</dbReference>
<dbReference type="SignaLink" id="Q8NEB9"/>
<dbReference type="SIGNOR" id="Q8NEB9"/>
<dbReference type="BioGRID-ORCS" id="5289">
    <property type="hits" value="596 hits in 1200 CRISPR screens"/>
</dbReference>
<dbReference type="ChiTaRS" id="PIK3C3">
    <property type="organism name" value="human"/>
</dbReference>
<dbReference type="EvolutionaryTrace" id="Q8NEB9"/>
<dbReference type="GeneWiki" id="PIK3C3"/>
<dbReference type="GenomeRNAi" id="5289"/>
<dbReference type="Pharos" id="Q8NEB9">
    <property type="development level" value="Tchem"/>
</dbReference>
<dbReference type="PRO" id="PR:Q8NEB9"/>
<dbReference type="Proteomes" id="UP000005640">
    <property type="component" value="Chromosome 18"/>
</dbReference>
<dbReference type="RNAct" id="Q8NEB9">
    <property type="molecule type" value="protein"/>
</dbReference>
<dbReference type="Bgee" id="ENSG00000078142">
    <property type="expression patterns" value="Expressed in calcaneal tendon and 202 other cell types or tissues"/>
</dbReference>
<dbReference type="ExpressionAtlas" id="Q8NEB9">
    <property type="expression patterns" value="baseline and differential"/>
</dbReference>
<dbReference type="GO" id="GO:0044754">
    <property type="term" value="C:autolysosome"/>
    <property type="evidence" value="ECO:0000314"/>
    <property type="project" value="MGI"/>
</dbReference>
<dbReference type="GO" id="GO:0005776">
    <property type="term" value="C:autophagosome"/>
    <property type="evidence" value="ECO:0007669"/>
    <property type="project" value="UniProtKB-SubCell"/>
</dbReference>
<dbReference type="GO" id="GO:0005930">
    <property type="term" value="C:axoneme"/>
    <property type="evidence" value="ECO:0000250"/>
    <property type="project" value="UniProtKB"/>
</dbReference>
<dbReference type="GO" id="GO:0005737">
    <property type="term" value="C:cytoplasm"/>
    <property type="evidence" value="ECO:0000318"/>
    <property type="project" value="GO_Central"/>
</dbReference>
<dbReference type="GO" id="GO:0005829">
    <property type="term" value="C:cytosol"/>
    <property type="evidence" value="ECO:0000304"/>
    <property type="project" value="Reactome"/>
</dbReference>
<dbReference type="GO" id="GO:0005768">
    <property type="term" value="C:endosome"/>
    <property type="evidence" value="ECO:0000318"/>
    <property type="project" value="GO_Central"/>
</dbReference>
<dbReference type="GO" id="GO:0098982">
    <property type="term" value="C:GABA-ergic synapse"/>
    <property type="evidence" value="ECO:0007669"/>
    <property type="project" value="Ensembl"/>
</dbReference>
<dbReference type="GO" id="GO:0098978">
    <property type="term" value="C:glutamatergic synapse"/>
    <property type="evidence" value="ECO:0007669"/>
    <property type="project" value="Ensembl"/>
</dbReference>
<dbReference type="GO" id="GO:0005770">
    <property type="term" value="C:late endosome"/>
    <property type="evidence" value="ECO:0000314"/>
    <property type="project" value="UniProtKB"/>
</dbReference>
<dbReference type="GO" id="GO:0016020">
    <property type="term" value="C:membrane"/>
    <property type="evidence" value="ECO:0007005"/>
    <property type="project" value="UniProtKB"/>
</dbReference>
<dbReference type="GO" id="GO:0030496">
    <property type="term" value="C:midbody"/>
    <property type="evidence" value="ECO:0000314"/>
    <property type="project" value="UniProtKB"/>
</dbReference>
<dbReference type="GO" id="GO:0005777">
    <property type="term" value="C:peroxisome"/>
    <property type="evidence" value="ECO:0000318"/>
    <property type="project" value="GO_Central"/>
</dbReference>
<dbReference type="GO" id="GO:0030670">
    <property type="term" value="C:phagocytic vesicle membrane"/>
    <property type="evidence" value="ECO:0000304"/>
    <property type="project" value="Reactome"/>
</dbReference>
<dbReference type="GO" id="GO:0000407">
    <property type="term" value="C:phagophore assembly site"/>
    <property type="evidence" value="ECO:0000318"/>
    <property type="project" value="GO_Central"/>
</dbReference>
<dbReference type="GO" id="GO:0035032">
    <property type="term" value="C:phosphatidylinositol 3-kinase complex, class III"/>
    <property type="evidence" value="ECO:0000353"/>
    <property type="project" value="ComplexPortal"/>
</dbReference>
<dbReference type="GO" id="GO:0034271">
    <property type="term" value="C:phosphatidylinositol 3-kinase complex, class III, type I"/>
    <property type="evidence" value="ECO:0000318"/>
    <property type="project" value="GO_Central"/>
</dbReference>
<dbReference type="GO" id="GO:0034272">
    <property type="term" value="C:phosphatidylinositol 3-kinase complex, class III, type II"/>
    <property type="evidence" value="ECO:0000318"/>
    <property type="project" value="GO_Central"/>
</dbReference>
<dbReference type="GO" id="GO:0098845">
    <property type="term" value="C:postsynaptic endosome"/>
    <property type="evidence" value="ECO:0007669"/>
    <property type="project" value="Ensembl"/>
</dbReference>
<dbReference type="GO" id="GO:0098830">
    <property type="term" value="C:presynaptic endosome"/>
    <property type="evidence" value="ECO:0007669"/>
    <property type="project" value="Ensembl"/>
</dbReference>
<dbReference type="GO" id="GO:0016303">
    <property type="term" value="F:1-phosphatidylinositol-3-kinase activity"/>
    <property type="evidence" value="ECO:0000314"/>
    <property type="project" value="MGI"/>
</dbReference>
<dbReference type="GO" id="GO:0005524">
    <property type="term" value="F:ATP binding"/>
    <property type="evidence" value="ECO:0007669"/>
    <property type="project" value="UniProtKB-KW"/>
</dbReference>
<dbReference type="GO" id="GO:0052742">
    <property type="term" value="F:phosphatidylinositol kinase activity"/>
    <property type="evidence" value="ECO:0000314"/>
    <property type="project" value="UniProt"/>
</dbReference>
<dbReference type="GO" id="GO:0004672">
    <property type="term" value="F:protein kinase activity"/>
    <property type="evidence" value="ECO:0007669"/>
    <property type="project" value="Ensembl"/>
</dbReference>
<dbReference type="GO" id="GO:0000045">
    <property type="term" value="P:autophagosome assembly"/>
    <property type="evidence" value="ECO:0000314"/>
    <property type="project" value="UniProt"/>
</dbReference>
<dbReference type="GO" id="GO:0097352">
    <property type="term" value="P:autophagosome maturation"/>
    <property type="evidence" value="ECO:0000314"/>
    <property type="project" value="ComplexPortal"/>
</dbReference>
<dbReference type="GO" id="GO:0006914">
    <property type="term" value="P:autophagy"/>
    <property type="evidence" value="ECO:0000315"/>
    <property type="project" value="MGI"/>
</dbReference>
<dbReference type="GO" id="GO:0051301">
    <property type="term" value="P:cell division"/>
    <property type="evidence" value="ECO:0007669"/>
    <property type="project" value="UniProtKB-KW"/>
</dbReference>
<dbReference type="GO" id="GO:0042149">
    <property type="term" value="P:cellular response to glucose starvation"/>
    <property type="evidence" value="ECO:0000250"/>
    <property type="project" value="UniProtKB"/>
</dbReference>
<dbReference type="GO" id="GO:0045022">
    <property type="term" value="P:early endosome to late endosome transport"/>
    <property type="evidence" value="ECO:0000314"/>
    <property type="project" value="ComplexPortal"/>
</dbReference>
<dbReference type="GO" id="GO:0006897">
    <property type="term" value="P:endocytosis"/>
    <property type="evidence" value="ECO:0000318"/>
    <property type="project" value="GO_Central"/>
</dbReference>
<dbReference type="GO" id="GO:0007032">
    <property type="term" value="P:endosome organization"/>
    <property type="evidence" value="ECO:0007669"/>
    <property type="project" value="Ensembl"/>
</dbReference>
<dbReference type="GO" id="GO:0016236">
    <property type="term" value="P:macroautophagy"/>
    <property type="evidence" value="ECO:0000250"/>
    <property type="project" value="UniProtKB"/>
</dbReference>
<dbReference type="GO" id="GO:0000425">
    <property type="term" value="P:pexophagy"/>
    <property type="evidence" value="ECO:0000318"/>
    <property type="project" value="GO_Central"/>
</dbReference>
<dbReference type="GO" id="GO:0043491">
    <property type="term" value="P:phosphatidylinositol 3-kinase/protein kinase B signal transduction"/>
    <property type="evidence" value="ECO:0007669"/>
    <property type="project" value="Ensembl"/>
</dbReference>
<dbReference type="GO" id="GO:0046854">
    <property type="term" value="P:phosphatidylinositol phosphate biosynthetic process"/>
    <property type="evidence" value="ECO:0000314"/>
    <property type="project" value="UniProt"/>
</dbReference>
<dbReference type="GO" id="GO:0036092">
    <property type="term" value="P:phosphatidylinositol-3-phosphate biosynthetic process"/>
    <property type="evidence" value="ECO:0000314"/>
    <property type="project" value="ComplexPortal"/>
</dbReference>
<dbReference type="GO" id="GO:0048015">
    <property type="term" value="P:phosphatidylinositol-mediated signaling"/>
    <property type="evidence" value="ECO:0000318"/>
    <property type="project" value="GO_Central"/>
</dbReference>
<dbReference type="GO" id="GO:0044829">
    <property type="term" value="P:positive regulation by host of viral genome replication"/>
    <property type="evidence" value="ECO:0000314"/>
    <property type="project" value="UniProtKB"/>
</dbReference>
<dbReference type="GO" id="GO:1903061">
    <property type="term" value="P:positive regulation of protein lipidation"/>
    <property type="evidence" value="ECO:0000315"/>
    <property type="project" value="MGI"/>
</dbReference>
<dbReference type="GO" id="GO:0034497">
    <property type="term" value="P:protein localization to phagophore assembly site"/>
    <property type="evidence" value="ECO:0007669"/>
    <property type="project" value="Ensembl"/>
</dbReference>
<dbReference type="GO" id="GO:0016485">
    <property type="term" value="P:protein processing"/>
    <property type="evidence" value="ECO:0007669"/>
    <property type="project" value="Ensembl"/>
</dbReference>
<dbReference type="GO" id="GO:0006622">
    <property type="term" value="P:protein targeting to lysosome"/>
    <property type="evidence" value="ECO:0000303"/>
    <property type="project" value="ComplexPortal"/>
</dbReference>
<dbReference type="GO" id="GO:0010506">
    <property type="term" value="P:regulation of autophagy"/>
    <property type="evidence" value="ECO:0000314"/>
    <property type="project" value="ComplexPortal"/>
</dbReference>
<dbReference type="GO" id="GO:0032465">
    <property type="term" value="P:regulation of cytokinesis"/>
    <property type="evidence" value="ECO:0000315"/>
    <property type="project" value="UniProtKB"/>
</dbReference>
<dbReference type="GO" id="GO:0016241">
    <property type="term" value="P:regulation of macroautophagy"/>
    <property type="evidence" value="ECO:0000314"/>
    <property type="project" value="ComplexPortal"/>
</dbReference>
<dbReference type="GO" id="GO:0043201">
    <property type="term" value="P:response to L-leucine"/>
    <property type="evidence" value="ECO:0007669"/>
    <property type="project" value="Ensembl"/>
</dbReference>
<dbReference type="GO" id="GO:0048488">
    <property type="term" value="P:synaptic vesicle endocytosis"/>
    <property type="evidence" value="ECO:0007669"/>
    <property type="project" value="Ensembl"/>
</dbReference>
<dbReference type="CDD" id="cd08397">
    <property type="entry name" value="C2_PI3K_class_III"/>
    <property type="match status" value="1"/>
</dbReference>
<dbReference type="CDD" id="cd00870">
    <property type="entry name" value="PI3Ka_III"/>
    <property type="match status" value="1"/>
</dbReference>
<dbReference type="CDD" id="cd00896">
    <property type="entry name" value="PI3Kc_III"/>
    <property type="match status" value="1"/>
</dbReference>
<dbReference type="FunFam" id="1.10.1070.11:FF:000002">
    <property type="entry name" value="Phosphatidylinositol 3-kinase catalytic subunit type 3"/>
    <property type="match status" value="1"/>
</dbReference>
<dbReference type="FunFam" id="1.25.40.70:FF:000003">
    <property type="entry name" value="Phosphatidylinositol 3-kinase catalytic subunit type 3"/>
    <property type="match status" value="1"/>
</dbReference>
<dbReference type="FunFam" id="2.60.40.150:FF:000043">
    <property type="entry name" value="Phosphatidylinositol 3-kinase catalytic subunit type 3"/>
    <property type="match status" value="1"/>
</dbReference>
<dbReference type="FunFam" id="3.30.1010.10:FF:000002">
    <property type="entry name" value="Phosphatidylinositol 3-kinase catalytic subunit type 3"/>
    <property type="match status" value="1"/>
</dbReference>
<dbReference type="Gene3D" id="2.60.40.150">
    <property type="entry name" value="C2 domain"/>
    <property type="match status" value="1"/>
</dbReference>
<dbReference type="Gene3D" id="1.10.1070.11">
    <property type="entry name" value="Phosphatidylinositol 3-/4-kinase, catalytic domain"/>
    <property type="match status" value="1"/>
</dbReference>
<dbReference type="Gene3D" id="3.30.1010.10">
    <property type="entry name" value="Phosphatidylinositol 3-kinase Catalytic Subunit, Chain A, domain 4"/>
    <property type="match status" value="1"/>
</dbReference>
<dbReference type="Gene3D" id="1.25.40.70">
    <property type="entry name" value="Phosphatidylinositol 3-kinase, accessory domain (PIK)"/>
    <property type="match status" value="1"/>
</dbReference>
<dbReference type="InterPro" id="IPR016024">
    <property type="entry name" value="ARM-type_fold"/>
</dbReference>
<dbReference type="InterPro" id="IPR035892">
    <property type="entry name" value="C2_domain_sf"/>
</dbReference>
<dbReference type="InterPro" id="IPR011009">
    <property type="entry name" value="Kinase-like_dom_sf"/>
</dbReference>
<dbReference type="InterPro" id="IPR000403">
    <property type="entry name" value="PI3/4_kinase_cat_dom"/>
</dbReference>
<dbReference type="InterPro" id="IPR036940">
    <property type="entry name" value="PI3/4_kinase_cat_sf"/>
</dbReference>
<dbReference type="InterPro" id="IPR018936">
    <property type="entry name" value="PI3/4_kinase_CS"/>
</dbReference>
<dbReference type="InterPro" id="IPR002420">
    <property type="entry name" value="PI3K-type_C2_dom"/>
</dbReference>
<dbReference type="InterPro" id="IPR001263">
    <property type="entry name" value="PI3K_accessory_dom"/>
</dbReference>
<dbReference type="InterPro" id="IPR042236">
    <property type="entry name" value="PI3K_accessory_sf"/>
</dbReference>
<dbReference type="InterPro" id="IPR008290">
    <property type="entry name" value="PI3K_Vps34"/>
</dbReference>
<dbReference type="InterPro" id="IPR015433">
    <property type="entry name" value="PI_Kinase"/>
</dbReference>
<dbReference type="PANTHER" id="PTHR10048:SF7">
    <property type="entry name" value="PHOSPHATIDYLINOSITOL 3-KINASE CATALYTIC SUBUNIT TYPE 3"/>
    <property type="match status" value="1"/>
</dbReference>
<dbReference type="PANTHER" id="PTHR10048">
    <property type="entry name" value="PHOSPHATIDYLINOSITOL KINASE"/>
    <property type="match status" value="1"/>
</dbReference>
<dbReference type="Pfam" id="PF00454">
    <property type="entry name" value="PI3_PI4_kinase"/>
    <property type="match status" value="1"/>
</dbReference>
<dbReference type="Pfam" id="PF00792">
    <property type="entry name" value="PI3K_C2"/>
    <property type="match status" value="1"/>
</dbReference>
<dbReference type="Pfam" id="PF00613">
    <property type="entry name" value="PI3Ka"/>
    <property type="match status" value="1"/>
</dbReference>
<dbReference type="PIRSF" id="PIRSF000587">
    <property type="entry name" value="PI3K_Vps34"/>
    <property type="match status" value="1"/>
</dbReference>
<dbReference type="SMART" id="SM00142">
    <property type="entry name" value="PI3K_C2"/>
    <property type="match status" value="1"/>
</dbReference>
<dbReference type="SMART" id="SM00145">
    <property type="entry name" value="PI3Ka"/>
    <property type="match status" value="1"/>
</dbReference>
<dbReference type="SMART" id="SM00146">
    <property type="entry name" value="PI3Kc"/>
    <property type="match status" value="1"/>
</dbReference>
<dbReference type="SUPFAM" id="SSF48371">
    <property type="entry name" value="ARM repeat"/>
    <property type="match status" value="1"/>
</dbReference>
<dbReference type="SUPFAM" id="SSF49562">
    <property type="entry name" value="C2 domain (Calcium/lipid-binding domain, CaLB)"/>
    <property type="match status" value="1"/>
</dbReference>
<dbReference type="SUPFAM" id="SSF56112">
    <property type="entry name" value="Protein kinase-like (PK-like)"/>
    <property type="match status" value="1"/>
</dbReference>
<dbReference type="PROSITE" id="PS51547">
    <property type="entry name" value="C2_PI3K"/>
    <property type="match status" value="1"/>
</dbReference>
<dbReference type="PROSITE" id="PS00915">
    <property type="entry name" value="PI3_4_KINASE_1"/>
    <property type="match status" value="1"/>
</dbReference>
<dbReference type="PROSITE" id="PS00916">
    <property type="entry name" value="PI3_4_KINASE_2"/>
    <property type="match status" value="1"/>
</dbReference>
<dbReference type="PROSITE" id="PS50290">
    <property type="entry name" value="PI3_4_KINASE_3"/>
    <property type="match status" value="1"/>
</dbReference>
<dbReference type="PROSITE" id="PS51545">
    <property type="entry name" value="PIK_HELICAL"/>
    <property type="match status" value="1"/>
</dbReference>
<reference key="1">
    <citation type="journal article" date="1995" name="EMBO J.">
        <title>A human phosphatidylinositol 3-kinase complex related to the yeast Vps34p-Vps15p protein sorting system.</title>
        <authorList>
            <person name="Volinia S."/>
            <person name="Dhand R."/>
            <person name="Vanhaesebroeck B."/>
            <person name="MacDougall L.K."/>
            <person name="Zvelebil M.J."/>
            <person name="Domin J."/>
            <person name="Panaretou C."/>
            <person name="Waterfield M.D."/>
        </authorList>
    </citation>
    <scope>NUCLEOTIDE SEQUENCE [MRNA]</scope>
    <scope>FUNCTION</scope>
    <scope>CATALYTIC ACTIVITY</scope>
    <scope>COFACTOR</scope>
    <scope>SUBUNIT</scope>
    <scope>TISSUE SPECIFICITY</scope>
    <scope>INTERACTION WITH PIK3R4</scope>
</reference>
<reference key="2">
    <citation type="journal article" date="2004" name="Genome Res.">
        <title>The status, quality, and expansion of the NIH full-length cDNA project: the Mammalian Gene Collection (MGC).</title>
        <authorList>
            <consortium name="The MGC Project Team"/>
        </authorList>
    </citation>
    <scope>NUCLEOTIDE SEQUENCE [LARGE SCALE MRNA]</scope>
    <source>
        <tissue>Testis</tissue>
        <tissue>Uterus</tissue>
    </source>
</reference>
<reference evidence="24" key="3">
    <citation type="journal article" date="2003" name="Traffic">
        <title>Human VPS34 and p150 are Rab7 interacting partners.</title>
        <authorList>
            <person name="Stein M.P."/>
            <person name="Feng Y."/>
            <person name="Cooper K.L."/>
            <person name="Welford A.M."/>
            <person name="Wandinger-Ness A."/>
        </authorList>
    </citation>
    <scope>FUNCTION</scope>
    <scope>INTERACTION WITH RAB7A AND PIK3R4</scope>
    <scope>SUBCELLULAR LOCATION</scope>
</reference>
<reference key="4">
    <citation type="journal article" date="2006" name="PLoS Biol.">
        <title>Hem-1 complexes are essential for Rac activation, actin polymerization, and myosin regulation during neutrophil chemotaxis.</title>
        <authorList>
            <person name="Weiner O.D."/>
            <person name="Rentel M.C."/>
            <person name="Ott A."/>
            <person name="Brown G.E."/>
            <person name="Jedrychowski M."/>
            <person name="Yaffe M.B."/>
            <person name="Gygi S.P."/>
            <person name="Cantley L.C."/>
            <person name="Bourne H.R."/>
            <person name="Kirschner M.W."/>
        </authorList>
    </citation>
    <scope>INTERACTION WITH NCKAP1L</scope>
</reference>
<reference key="5">
    <citation type="journal article" date="2008" name="Mol. Cell">
        <title>Kinase-selective enrichment enables quantitative phosphoproteomics of the kinome across the cell cycle.</title>
        <authorList>
            <person name="Daub H."/>
            <person name="Olsen J.V."/>
            <person name="Bairlein M."/>
            <person name="Gnad F."/>
            <person name="Oppermann F.S."/>
            <person name="Korner R."/>
            <person name="Greff Z."/>
            <person name="Keri G."/>
            <person name="Stemmann O."/>
            <person name="Mann M."/>
        </authorList>
    </citation>
    <scope>IDENTIFICATION BY MASS SPECTROMETRY [LARGE SCALE ANALYSIS]</scope>
    <source>
        <tissue>Cervix carcinoma</tissue>
    </source>
</reference>
<reference key="6">
    <citation type="journal article" date="2008" name="Proc. Natl. Acad. Sci. U.S.A.">
        <title>Identification of Barkor as a mammalian autophagy-specific factor for Beclin 1 and class III phosphatidylinositol 3-kinase.</title>
        <authorList>
            <person name="Sun Q."/>
            <person name="Fan W."/>
            <person name="Chen K."/>
            <person name="Ding X."/>
            <person name="Chen S."/>
            <person name="Zhong Q."/>
        </authorList>
    </citation>
    <scope>INTERACTION WITH BECN1 AND ATG14</scope>
</reference>
<reference key="7">
    <citation type="journal article" date="2009" name="Mol. Cell. Proteomics">
        <title>Large-scale proteomics analysis of the human kinome.</title>
        <authorList>
            <person name="Oppermann F.S."/>
            <person name="Gnad F."/>
            <person name="Olsen J.V."/>
            <person name="Hornberger R."/>
            <person name="Greff Z."/>
            <person name="Keri G."/>
            <person name="Mann M."/>
            <person name="Daub H."/>
        </authorList>
    </citation>
    <scope>PHOSPHORYLATION [LARGE SCALE ANALYSIS] AT SER-261</scope>
    <scope>IDENTIFICATION BY MASS SPECTROMETRY [LARGE SCALE ANALYSIS]</scope>
</reference>
<reference key="8">
    <citation type="journal article" date="2010" name="Exp. Cell Res.">
        <title>A phosphatidylinositol 3-kinase class III sub-complex containing VPS15, VPS34, Beclin 1, UVRAG and BIF-1 regulates cytokinesis and degradative endocytic traffic.</title>
        <authorList>
            <person name="Thoresen S.B."/>
            <person name="Pedersen N.M."/>
            <person name="Liestol K."/>
            <person name="Stenmark H."/>
        </authorList>
    </citation>
    <scope>FUNCTION</scope>
    <scope>SUBUNIT</scope>
</reference>
<reference key="9">
    <citation type="journal article" date="2009" name="Nat. Cell Biol.">
        <title>Two Beclin 1-binding proteins, Atg14L and Rubicon, reciprocally regulate autophagy at different stages.</title>
        <authorList>
            <person name="Matsunaga K."/>
            <person name="Saitoh T."/>
            <person name="Tabata K."/>
            <person name="Omori H."/>
            <person name="Satoh T."/>
            <person name="Kurotori N."/>
            <person name="Maejima I."/>
            <person name="Shirahama-Noda K."/>
            <person name="Ichimura T."/>
            <person name="Isobe T."/>
            <person name="Akira S."/>
            <person name="Noda T."/>
            <person name="Yoshimori T."/>
        </authorList>
    </citation>
    <scope>INTERACTION WITH BECN1; RUBCN; ATG14; PIK3R4 AND UVRAG</scope>
</reference>
<reference key="10">
    <citation type="journal article" date="2010" name="Nat. Cell Biol.">
        <title>PtdIns(3)P controls cytokinesis through KIF13A-mediated recruitment of FYVE-CENT to the midbody.</title>
        <authorList>
            <person name="Sagona A.P."/>
            <person name="Nezis I.P."/>
            <person name="Pedersen N.M."/>
            <person name="Liestol K."/>
            <person name="Poulton J."/>
            <person name="Rusten T.E."/>
            <person name="Skotheim R.I."/>
            <person name="Raiborg C."/>
            <person name="Stenmark H."/>
        </authorList>
    </citation>
    <scope>FUNCTION</scope>
    <scope>SUBCELLULAR LOCATION</scope>
</reference>
<reference key="11">
    <citation type="journal article" date="2011" name="BMC Syst. Biol.">
        <title>Initial characterization of the human central proteome.</title>
        <authorList>
            <person name="Burkard T.R."/>
            <person name="Planyavsky M."/>
            <person name="Kaupe I."/>
            <person name="Breitwieser F.P."/>
            <person name="Buerckstuemmer T."/>
            <person name="Bennett K.L."/>
            <person name="Superti-Furga G."/>
            <person name="Colinge J."/>
        </authorList>
    </citation>
    <scope>IDENTIFICATION BY MASS SPECTROMETRY [LARGE SCALE ANALYSIS]</scope>
</reference>
<reference key="12">
    <citation type="journal article" date="2012" name="J. Biol. Chem.">
        <title>Receptor signaling lymphocyte-activation molecule family 1 (Slamf1) regulates membrane fusion and NADPH oxidase 2 (NOX2) activity by recruiting a Beclin-1/Vps34/ultraviolet radiation resistance-associated gene (UVRAG) complex.</title>
        <authorList>
            <person name="Ma C."/>
            <person name="Wang N."/>
            <person name="Detre C."/>
            <person name="Wang G."/>
            <person name="O'Keeffe M."/>
            <person name="Terhorst C."/>
        </authorList>
    </citation>
    <scope>INTERACTION WITH SLAMF1</scope>
</reference>
<reference key="13">
    <citation type="journal article" date="2013" name="Cell">
        <title>Beclin 2 functions in autophagy, degradation of G protein-coupled receptors, and metabolism.</title>
        <authorList>
            <person name="He C."/>
            <person name="Wei Y."/>
            <person name="Sun K."/>
            <person name="Li B."/>
            <person name="Dong X."/>
            <person name="Zou Z."/>
            <person name="Liu Y."/>
            <person name="Kinch L.N."/>
            <person name="Khan S."/>
            <person name="Sinha S."/>
            <person name="Xavier R.J."/>
            <person name="Grishin N.V."/>
            <person name="Xiao G."/>
            <person name="Eskelinen E.L."/>
            <person name="Scherer P.E."/>
            <person name="Whistler J.L."/>
            <person name="Levine B."/>
        </authorList>
    </citation>
    <scope>INTERACTION WITH BECN1P1/BECN2</scope>
</reference>
<reference key="14">
    <citation type="journal article" date="2013" name="J. Proteome Res.">
        <title>Toward a comprehensive characterization of a human cancer cell phosphoproteome.</title>
        <authorList>
            <person name="Zhou H."/>
            <person name="Di Palma S."/>
            <person name="Preisinger C."/>
            <person name="Peng M."/>
            <person name="Polat A.N."/>
            <person name="Heck A.J."/>
            <person name="Mohammed S."/>
        </authorList>
    </citation>
    <scope>PHOSPHORYLATION [LARGE SCALE ANALYSIS] AT SER-282</scope>
    <scope>IDENTIFICATION BY MASS SPECTROMETRY [LARGE SCALE ANALYSIS]</scope>
    <source>
        <tissue>Cervix carcinoma</tissue>
        <tissue>Erythroleukemia</tissue>
    </source>
</reference>
<reference key="15">
    <citation type="journal article" date="2013" name="Mol. Cell. Biol.">
        <title>Role of membrane association and Atg14-dependent phosphorylation in beclin-1-mediated autophagy.</title>
        <authorList>
            <person name="Fogel A.I."/>
            <person name="Dlouhy B.J."/>
            <person name="Wang C."/>
            <person name="Ryu S.W."/>
            <person name="Neutzner A."/>
            <person name="Hasson S.A."/>
            <person name="Sideris D.P."/>
            <person name="Abeliovich H."/>
            <person name="Youle R.J."/>
        </authorList>
    </citation>
    <scope>INTERACTION WITH BECN1</scope>
</reference>
<reference key="16">
    <citation type="journal article" date="2014" name="Elife">
        <title>Architecture and dynamics of the autophagic phosphatidylinositol 3-kinase complex.</title>
        <authorList>
            <person name="Baskaran S."/>
            <person name="Carlson L.A."/>
            <person name="Stjepanovic G."/>
            <person name="Young L.N."/>
            <person name="Kim do J."/>
            <person name="Grob P."/>
            <person name="Stanley R.E."/>
            <person name="Nogales E."/>
            <person name="Hurley J.H."/>
        </authorList>
    </citation>
    <scope>RECONSTITUTION OF THE PI3K COMPLEX I</scope>
    <scope>ELECTRON MICROSCOPY OF THE PI3K COMPLEX I</scope>
</reference>
<reference key="17">
    <citation type="journal article" date="2019" name="Mol. Cell">
        <title>The ER-Localized Transmembrane Protein TMEM39A/SUSR2 Regulates Autophagy by Controlling the Trafficking of the PtdIns(4)P Phosphatase SAC1.</title>
        <authorList>
            <person name="Miao G."/>
            <person name="Zhang Y."/>
            <person name="Chen D."/>
            <person name="Zhang H."/>
        </authorList>
    </citation>
    <scope>INTERACTION WITH ATG14</scope>
</reference>
<reference key="18">
    <citation type="journal article" date="2020" name="Nat. Immunol.">
        <title>STEEP mediates STING ER exit and activation of signaling.</title>
        <authorList>
            <person name="Zhang B.C."/>
            <person name="Nandakumar R."/>
            <person name="Reinert L.S."/>
            <person name="Huang J."/>
            <person name="Laustsen A."/>
            <person name="Gao Z.L."/>
            <person name="Sun C.L."/>
            <person name="Jensen S.B."/>
            <person name="Troldborg A."/>
            <person name="Assil S."/>
            <person name="Berthelsen M.F."/>
            <person name="Scavenius C."/>
            <person name="Zhang Y."/>
            <person name="Windross S.J."/>
            <person name="Olagnier D."/>
            <person name="Prabakaran T."/>
            <person name="Bodda C."/>
            <person name="Narita R."/>
            <person name="Cai Y."/>
            <person name="Zhang C.G."/>
            <person name="Stenmark H."/>
            <person name="Doucet C.M."/>
            <person name="Noda T."/>
            <person name="Guo Z."/>
            <person name="Goldbach-Mansky R."/>
            <person name="Hartmann R."/>
            <person name="Chen Z.J."/>
            <person name="Enghild J.J."/>
            <person name="Bak R.O."/>
            <person name="Thomsen M.K."/>
            <person name="Paludan S.R."/>
        </authorList>
    </citation>
    <scope>FUNCTION</scope>
    <scope>INTERACTION WITH STEEP1</scope>
</reference>
<reference key="19">
    <citation type="journal article" date="2020" name="Nat. Immunol.">
        <authorList>
            <person name="Zhang B.C."/>
            <person name="Nandakumar R."/>
            <person name="Reinert L.S."/>
            <person name="Huang J."/>
            <person name="Laustsen A."/>
            <person name="Gao Z.L."/>
            <person name="Sun C.L."/>
            <person name="Jensen S.B."/>
            <person name="Troldborg A."/>
            <person name="Assil S."/>
            <person name="Berthelsen M.F."/>
            <person name="Scavenius C."/>
            <person name="Zhang Y."/>
            <person name="Windross S.J."/>
            <person name="Olagnier D."/>
            <person name="Prabakaran T."/>
            <person name="Bodda C."/>
            <person name="Narita R."/>
            <person name="Cai Y."/>
            <person name="Zhang C.G."/>
            <person name="Stenmark H."/>
            <person name="Doucet C.M."/>
            <person name="Noda T."/>
            <person name="Guo Z."/>
            <person name="Goldbach-Mansky R."/>
            <person name="Hartmann R."/>
            <person name="Chen Z.J."/>
            <person name="Enghild J.J."/>
            <person name="Bak R.O."/>
            <person name="Thomsen M.K."/>
            <person name="Paludan S.R."/>
        </authorList>
    </citation>
    <scope>ERRATUM OF PUBMED:32690950</scope>
</reference>
<reference key="20">
    <citation type="journal article" date="2021" name="Cell Rep.">
        <title>Inhibitors of VPS34 and fatty-acid metabolism suppress SARS-CoV-2 replication.</title>
        <authorList>
            <person name="Williams C.G."/>
            <person name="Jureka A.S."/>
            <person name="Silvas J.A."/>
            <person name="Nicolini A.M."/>
            <person name="Chvatal S.A."/>
            <person name="Carlson-Stevermer J."/>
            <person name="Oki J."/>
            <person name="Holden K."/>
            <person name="Basler C.F."/>
        </authorList>
    </citation>
    <scope>FUNCTION (MICROBIAL INFECTION)</scope>
</reference>
<reference key="21">
    <citation type="journal article" date="2021" name="Nat. Commun.">
        <title>Endonuclease G promotes autophagy by suppressing mTOR signaling and activating the DNA damage response.</title>
        <authorList>
            <person name="Wang W."/>
            <person name="Li J."/>
            <person name="Tan J."/>
            <person name="Wang M."/>
            <person name="Yang J."/>
            <person name="Zhang Z.M."/>
            <person name="Li C."/>
            <person name="Basnakian A.G."/>
            <person name="Tang H.W."/>
            <person name="Perrimon N."/>
            <person name="Zhou Q."/>
        </authorList>
    </citation>
    <scope>INTERACTION WITH YWHAG</scope>
</reference>
<reference key="22">
    <citation type="journal article" date="2021" name="Nat. Commun.">
        <title>VPS34 K29/K48 branched ubiquitination governed by UBE3C and TRABID regulates autophagy, proteostasis and liver metabolism.</title>
        <authorList>
            <person name="Chen Y.H."/>
            <person name="Huang T.Y."/>
            <person name="Lin Y.T."/>
            <person name="Lin S.Y."/>
            <person name="Li W.H."/>
            <person name="Hsiao H.J."/>
            <person name="Yan R.L."/>
            <person name="Tang H.W."/>
            <person name="Shen Z.Q."/>
            <person name="Chen G.C."/>
            <person name="Wu K.P."/>
            <person name="Tsai T.F."/>
            <person name="Chen R.H."/>
        </authorList>
    </citation>
    <scope>FUNCTION</scope>
    <scope>UBIQUITINATION</scope>
    <scope>DEUBIQUITINATION</scope>
</reference>
<sequence>MGEAEKFHYIYSCDLDINVQLKIGSLEGKREQKSYKAVLEDPMLKFSGLYQETCSDLYVTCQVFAEGKPLALPVRTSYKAFSTRWNWNEWLKLPVKYPDLPRNAQVALTIWDVYGPGKAVPVGGTTVSLFGKYGMFRQGMHDLKVWPNVEADGSEPTKTPGRTSSTLSEDQMSRLAKLTKAHRQGHMVKVDWLDRLTFREIEMINESEKRSSNFMYLMVEFRCVKCDDKEYGIVYYEKDGDESSPILTSFELVKVPDPQMSMENLVESKHHKLARSLRSGPSDHDLKPNAATRDQLNIIVSYPPTKQLTYEEQDLVWKFRYYLTNQEKALTKFLKCVNWDLPQEAKQALELLGKWKPMDVEDSLELLSSHYTNPTVRRYAVARLRQADDEDLLMYLLQLVQALKYENFDDIKNGLEPTKKDSQSSVSENVSNSGINSAEIDSSQIITSPLPSVSSPPPASKTKEVPDGENLEQDLCTFLISRACKNSTLANYLYWYVIVECEDQDTQQRDPKTHEMYLNVMRRFSQALLKGDKSVRVMRSLLAAQQTFVDRLVHLMKAVQRESGNRKKKNERLQALLGDNEKMNLSDVELIPLPLEPQVKIRGIIPETATLFKSALMPAQLFFKTEDGGKYPVIFKHGDDLRQDQLILQIISLMDKLLRKENLDLKLTPYKVLATSTKHGFMQFIQSVPVAEVLDTEGSIQNFFRKYAPSENGPNGISAEVMDTYVKSCAGYCVITYILGVGDRHLDNLLLTKTGKLFHIDFGYILGRDPKPLPPPMKLNKEMVEGMGGTQSEQYQEFRKQCYTAFLHLRRYSNLILNLFSLMVDANIPDIALEPDKTVKKVQDKFRLDLSDEEAVHYMQSLIDESVHALFAAVVEQIHKFAQYWRK</sequence>
<gene>
    <name evidence="27" type="primary">PIK3C3</name>
    <name evidence="24" type="synonym">VPS34</name>
</gene>